<sequence>MTKKLALKRKGKESEPINKVVASSEASENEEEEEDLLQAVKDPGEDSTDDEGIDQEYHSDSSEELQFESDEEGNYLGRKQSSSAEEDEESSDEDDDGEEESSDEEEVEDEEKDSKLKQSDDKPSSSGAASKKAPTTELSKRDTSKPEYQDSDTSDEEDIRNTVGNIPMHWYDEYKHIGYDWDAKKIIKPPQGDQIDEFLRKIEDPDFWRTVKDPLTGQDVRLTDEDIALIKRIVSGRIPNKDHEEYEPWIEWFTSEVEKMPIKNVPDHKRSFLPSVSEKKRVSRMVHALKMGWMKTTEEVEREKQAKRGPKFYMLWETDTSREHMRRIHDPVSAPKRDLPGHAESYNPPPEYLFDAKETKEWLKLKDEPHKRKLHFMPQKFKSLREVPAYSRYLRERFLRCLDLYLCPRAKRVKLNIDAEYLIPKLPSPRDLQPFPTVESMVYRGHTDLVRSVSVEPKGEYLVSGSDDKTVKIWEIATGRCIRTIETDEVVRCVAWCPNPKLSIIAVATGNRLLLVNPKVGDKVLVKKTDDLLAEAPSQDVIESERIKTAVQWSNAEADEQEKGVRVVITHFKPIRQVTWHGRGDYLATVMPEGANRSALIHQLSKRRSQIPFSKSKGLIQFVLFHPVKPCFFVATQHNIRIYDLVKQELVKKLLTNSKWISGMSIHPKGDNLLVSTYDKKMLWFDLDLSTKPYQTMRLHRNAVRSVAFHLRYPLFASGSDDQAVIVSHGMVYNDLLQNPLIVPLKKLQTHEKRDEFGVLDVNWHPVQPWVFSTGADSTIRLYT</sequence>
<dbReference type="EMBL" id="CH954179">
    <property type="protein sequence ID" value="EDV54982.1"/>
    <property type="molecule type" value="Genomic_DNA"/>
</dbReference>
<dbReference type="SMR" id="B3NLK7"/>
<dbReference type="EnsemblMetazoa" id="FBtr0141878">
    <property type="protein sequence ID" value="FBpp0140370"/>
    <property type="gene ID" value="FBgn0114002"/>
</dbReference>
<dbReference type="EnsemblMetazoa" id="XM_001974546.3">
    <property type="protein sequence ID" value="XP_001974582.1"/>
    <property type="gene ID" value="LOC6546825"/>
</dbReference>
<dbReference type="GeneID" id="6546825"/>
<dbReference type="KEGG" id="der:6546825"/>
<dbReference type="eggNOG" id="KOG0650">
    <property type="taxonomic scope" value="Eukaryota"/>
</dbReference>
<dbReference type="HOGENOM" id="CLU_011390_2_0_1"/>
<dbReference type="OMA" id="MRPAKGE"/>
<dbReference type="OrthoDB" id="5571054at2759"/>
<dbReference type="PhylomeDB" id="B3NLK7"/>
<dbReference type="Proteomes" id="UP000008711">
    <property type="component" value="Unassembled WGS sequence"/>
</dbReference>
<dbReference type="GO" id="GO:0005654">
    <property type="term" value="C:nucleoplasm"/>
    <property type="evidence" value="ECO:0007669"/>
    <property type="project" value="UniProtKB-SubCell"/>
</dbReference>
<dbReference type="GO" id="GO:0070545">
    <property type="term" value="C:PeBoW complex"/>
    <property type="evidence" value="ECO:0007669"/>
    <property type="project" value="TreeGrafter"/>
</dbReference>
<dbReference type="GO" id="GO:0030687">
    <property type="term" value="C:preribosome, large subunit precursor"/>
    <property type="evidence" value="ECO:0007669"/>
    <property type="project" value="UniProtKB-UniRule"/>
</dbReference>
<dbReference type="GO" id="GO:0043021">
    <property type="term" value="F:ribonucleoprotein complex binding"/>
    <property type="evidence" value="ECO:0007669"/>
    <property type="project" value="UniProtKB-UniRule"/>
</dbReference>
<dbReference type="GO" id="GO:0000466">
    <property type="term" value="P:maturation of 5.8S rRNA from tricistronic rRNA transcript (SSU-rRNA, 5.8S rRNA, LSU-rRNA)"/>
    <property type="evidence" value="ECO:0007669"/>
    <property type="project" value="UniProtKB-UniRule"/>
</dbReference>
<dbReference type="GO" id="GO:0000463">
    <property type="term" value="P:maturation of LSU-rRNA from tricistronic rRNA transcript (SSU-rRNA, 5.8S rRNA, LSU-rRNA)"/>
    <property type="evidence" value="ECO:0007669"/>
    <property type="project" value="UniProtKB-UniRule"/>
</dbReference>
<dbReference type="GO" id="GO:0035206">
    <property type="term" value="P:regulation of hemocyte proliferation"/>
    <property type="evidence" value="ECO:0007669"/>
    <property type="project" value="EnsemblMetazoa"/>
</dbReference>
<dbReference type="CDD" id="cd00200">
    <property type="entry name" value="WD40"/>
    <property type="match status" value="1"/>
</dbReference>
<dbReference type="FunFam" id="2.130.10.10:FF:000061">
    <property type="entry name" value="Ribosome biogenesis protein BOP1 homolog"/>
    <property type="match status" value="1"/>
</dbReference>
<dbReference type="Gene3D" id="2.130.10.10">
    <property type="entry name" value="YVTN repeat-like/Quinoprotein amine dehydrogenase"/>
    <property type="match status" value="1"/>
</dbReference>
<dbReference type="HAMAP" id="MF_03027">
    <property type="entry name" value="BOP1"/>
    <property type="match status" value="1"/>
</dbReference>
<dbReference type="InterPro" id="IPR028598">
    <property type="entry name" value="BOP1/Erb1"/>
</dbReference>
<dbReference type="InterPro" id="IPR012953">
    <property type="entry name" value="BOP1_N_dom"/>
</dbReference>
<dbReference type="InterPro" id="IPR015943">
    <property type="entry name" value="WD40/YVTN_repeat-like_dom_sf"/>
</dbReference>
<dbReference type="InterPro" id="IPR019775">
    <property type="entry name" value="WD40_repeat_CS"/>
</dbReference>
<dbReference type="InterPro" id="IPR036322">
    <property type="entry name" value="WD40_repeat_dom_sf"/>
</dbReference>
<dbReference type="InterPro" id="IPR001680">
    <property type="entry name" value="WD40_rpt"/>
</dbReference>
<dbReference type="PANTHER" id="PTHR17605:SF0">
    <property type="entry name" value="RIBOSOME BIOGENESIS PROTEIN BOP1"/>
    <property type="match status" value="1"/>
</dbReference>
<dbReference type="PANTHER" id="PTHR17605">
    <property type="entry name" value="RIBOSOME BIOGENESIS PROTEIN BOP1 BLOCK OF PROLIFERATION 1 PROTEIN"/>
    <property type="match status" value="1"/>
</dbReference>
<dbReference type="Pfam" id="PF08145">
    <property type="entry name" value="BOP1NT"/>
    <property type="match status" value="1"/>
</dbReference>
<dbReference type="Pfam" id="PF00400">
    <property type="entry name" value="WD40"/>
    <property type="match status" value="3"/>
</dbReference>
<dbReference type="SMART" id="SM01035">
    <property type="entry name" value="BOP1NT"/>
    <property type="match status" value="1"/>
</dbReference>
<dbReference type="SMART" id="SM00320">
    <property type="entry name" value="WD40"/>
    <property type="match status" value="7"/>
</dbReference>
<dbReference type="SUPFAM" id="SSF50978">
    <property type="entry name" value="WD40 repeat-like"/>
    <property type="match status" value="1"/>
</dbReference>
<dbReference type="PROSITE" id="PS00678">
    <property type="entry name" value="WD_REPEATS_1"/>
    <property type="match status" value="1"/>
</dbReference>
<dbReference type="PROSITE" id="PS50082">
    <property type="entry name" value="WD_REPEATS_2"/>
    <property type="match status" value="1"/>
</dbReference>
<dbReference type="PROSITE" id="PS50294">
    <property type="entry name" value="WD_REPEATS_REGION"/>
    <property type="match status" value="2"/>
</dbReference>
<gene>
    <name type="ORF">GG21824</name>
</gene>
<evidence type="ECO:0000255" key="1">
    <source>
        <dbReference type="HAMAP-Rule" id="MF_03027"/>
    </source>
</evidence>
<evidence type="ECO:0000256" key="2">
    <source>
        <dbReference type="SAM" id="MobiDB-lite"/>
    </source>
</evidence>
<organism>
    <name type="scientific">Drosophila erecta</name>
    <name type="common">Fruit fly</name>
    <dbReference type="NCBI Taxonomy" id="7220"/>
    <lineage>
        <taxon>Eukaryota</taxon>
        <taxon>Metazoa</taxon>
        <taxon>Ecdysozoa</taxon>
        <taxon>Arthropoda</taxon>
        <taxon>Hexapoda</taxon>
        <taxon>Insecta</taxon>
        <taxon>Pterygota</taxon>
        <taxon>Neoptera</taxon>
        <taxon>Endopterygota</taxon>
        <taxon>Diptera</taxon>
        <taxon>Brachycera</taxon>
        <taxon>Muscomorpha</taxon>
        <taxon>Ephydroidea</taxon>
        <taxon>Drosophilidae</taxon>
        <taxon>Drosophila</taxon>
        <taxon>Sophophora</taxon>
    </lineage>
</organism>
<protein>
    <recommendedName>
        <fullName evidence="1">Ribosome biogenesis protein BOP1 homolog</fullName>
    </recommendedName>
</protein>
<proteinExistence type="inferred from homology"/>
<name>BOP1_DROER</name>
<reference key="1">
    <citation type="journal article" date="2007" name="Nature">
        <title>Evolution of genes and genomes on the Drosophila phylogeny.</title>
        <authorList>
            <consortium name="Drosophila 12 genomes consortium"/>
        </authorList>
    </citation>
    <scope>NUCLEOTIDE SEQUENCE [LARGE SCALE GENOMIC DNA]</scope>
    <source>
        <strain>Tucson 14021-0224.01</strain>
    </source>
</reference>
<comment type="function">
    <text evidence="1">Required for maturation of ribosomal RNAs and formation of the large ribosomal subunit.</text>
</comment>
<comment type="subcellular location">
    <subcellularLocation>
        <location evidence="1">Nucleus</location>
        <location evidence="1">Nucleolus</location>
    </subcellularLocation>
    <subcellularLocation>
        <location evidence="1">Nucleus</location>
        <location evidence="1">Nucleoplasm</location>
    </subcellularLocation>
</comment>
<comment type="similarity">
    <text evidence="1">Belongs to the WD repeat BOP1/ERB1 family.</text>
</comment>
<feature type="chain" id="PRO_0000370395" description="Ribosome biogenesis protein BOP1 homolog">
    <location>
        <begin position="1"/>
        <end position="784"/>
    </location>
</feature>
<feature type="repeat" description="WD 1">
    <location>
        <begin position="445"/>
        <end position="486"/>
    </location>
</feature>
<feature type="repeat" description="WD 2">
    <location>
        <begin position="488"/>
        <end position="526"/>
    </location>
</feature>
<feature type="repeat" description="WD 3">
    <location>
        <begin position="570"/>
        <end position="612"/>
    </location>
</feature>
<feature type="repeat" description="WD 4">
    <location>
        <begin position="615"/>
        <end position="653"/>
    </location>
</feature>
<feature type="repeat" description="WD 5">
    <location>
        <begin position="656"/>
        <end position="695"/>
    </location>
</feature>
<feature type="repeat" description="WD 6">
    <location>
        <begin position="699"/>
        <end position="738"/>
    </location>
</feature>
<feature type="repeat" description="WD 7">
    <location>
        <begin position="754"/>
        <end position="784"/>
    </location>
</feature>
<feature type="region of interest" description="Disordered" evidence="2">
    <location>
        <begin position="1"/>
        <end position="159"/>
    </location>
</feature>
<feature type="compositionally biased region" description="Basic residues" evidence="2">
    <location>
        <begin position="1"/>
        <end position="11"/>
    </location>
</feature>
<feature type="compositionally biased region" description="Acidic residues" evidence="2">
    <location>
        <begin position="27"/>
        <end position="36"/>
    </location>
</feature>
<feature type="compositionally biased region" description="Acidic residues" evidence="2">
    <location>
        <begin position="45"/>
        <end position="54"/>
    </location>
</feature>
<feature type="compositionally biased region" description="Acidic residues" evidence="2">
    <location>
        <begin position="62"/>
        <end position="73"/>
    </location>
</feature>
<feature type="compositionally biased region" description="Acidic residues" evidence="2">
    <location>
        <begin position="84"/>
        <end position="111"/>
    </location>
</feature>
<feature type="compositionally biased region" description="Basic and acidic residues" evidence="2">
    <location>
        <begin position="112"/>
        <end position="123"/>
    </location>
</feature>
<feature type="compositionally biased region" description="Low complexity" evidence="2">
    <location>
        <begin position="124"/>
        <end position="133"/>
    </location>
</feature>
<feature type="compositionally biased region" description="Basic and acidic residues" evidence="2">
    <location>
        <begin position="138"/>
        <end position="148"/>
    </location>
</feature>
<feature type="compositionally biased region" description="Acidic residues" evidence="2">
    <location>
        <begin position="149"/>
        <end position="158"/>
    </location>
</feature>
<keyword id="KW-0539">Nucleus</keyword>
<keyword id="KW-0677">Repeat</keyword>
<keyword id="KW-0690">Ribosome biogenesis</keyword>
<keyword id="KW-0698">rRNA processing</keyword>
<keyword id="KW-0853">WD repeat</keyword>
<accession>B3NLK7</accession>